<evidence type="ECO:0000255" key="1">
    <source>
        <dbReference type="PROSITE-ProRule" id="PRU00464"/>
    </source>
</evidence>
<name>Y664_CHLMU</name>
<dbReference type="EMBL" id="AE002160">
    <property type="protein sequence ID" value="AAF73586.1"/>
    <property type="molecule type" value="Genomic_DNA"/>
</dbReference>
<dbReference type="SMR" id="Q9PK09"/>
<dbReference type="KEGG" id="cmu:TC_0664"/>
<dbReference type="eggNOG" id="COG0537">
    <property type="taxonomic scope" value="Bacteria"/>
</dbReference>
<dbReference type="HOGENOM" id="CLU_056776_8_1_0"/>
<dbReference type="Proteomes" id="UP000000800">
    <property type="component" value="Chromosome"/>
</dbReference>
<dbReference type="GO" id="GO:0003824">
    <property type="term" value="F:catalytic activity"/>
    <property type="evidence" value="ECO:0007669"/>
    <property type="project" value="InterPro"/>
</dbReference>
<dbReference type="Gene3D" id="3.30.428.10">
    <property type="entry name" value="HIT-like"/>
    <property type="match status" value="1"/>
</dbReference>
<dbReference type="InterPro" id="IPR019808">
    <property type="entry name" value="Histidine_triad_CS"/>
</dbReference>
<dbReference type="InterPro" id="IPR001310">
    <property type="entry name" value="Histidine_triad_HIT"/>
</dbReference>
<dbReference type="InterPro" id="IPR011146">
    <property type="entry name" value="HIT-like"/>
</dbReference>
<dbReference type="InterPro" id="IPR036265">
    <property type="entry name" value="HIT-like_sf"/>
</dbReference>
<dbReference type="PANTHER" id="PTHR23089">
    <property type="entry name" value="HISTIDINE TRIAD HIT PROTEIN"/>
    <property type="match status" value="1"/>
</dbReference>
<dbReference type="Pfam" id="PF11969">
    <property type="entry name" value="DcpS_C"/>
    <property type="match status" value="1"/>
</dbReference>
<dbReference type="PRINTS" id="PR00332">
    <property type="entry name" value="HISTRIAD"/>
</dbReference>
<dbReference type="SUPFAM" id="SSF54197">
    <property type="entry name" value="HIT-like"/>
    <property type="match status" value="1"/>
</dbReference>
<dbReference type="PROSITE" id="PS00892">
    <property type="entry name" value="HIT_1"/>
    <property type="match status" value="1"/>
</dbReference>
<dbReference type="PROSITE" id="PS51084">
    <property type="entry name" value="HIT_2"/>
    <property type="match status" value="1"/>
</dbReference>
<proteinExistence type="predicted"/>
<sequence>MRRSTEFGVKTAGGSMTTIFERIIEGAVECDKVFEDENFIVIKDKFPQAPVHLLIIPKKHIEKLQDMQSDDFSLLSEAGKIIQLMARDFGIENGYRVVINNGLEGGQSVFHLHIHLLGGGLLGSIA</sequence>
<protein>
    <recommendedName>
        <fullName>Uncharacterized HIT-like protein TC_0664</fullName>
    </recommendedName>
</protein>
<organism>
    <name type="scientific">Chlamydia muridarum (strain MoPn / Nigg)</name>
    <dbReference type="NCBI Taxonomy" id="243161"/>
    <lineage>
        <taxon>Bacteria</taxon>
        <taxon>Pseudomonadati</taxon>
        <taxon>Chlamydiota</taxon>
        <taxon>Chlamydiia</taxon>
        <taxon>Chlamydiales</taxon>
        <taxon>Chlamydiaceae</taxon>
        <taxon>Chlamydia/Chlamydophila group</taxon>
        <taxon>Chlamydia</taxon>
    </lineage>
</organism>
<reference key="1">
    <citation type="journal article" date="2000" name="Nucleic Acids Res.">
        <title>Genome sequences of Chlamydia trachomatis MoPn and Chlamydia pneumoniae AR39.</title>
        <authorList>
            <person name="Read T.D."/>
            <person name="Brunham R.C."/>
            <person name="Shen C."/>
            <person name="Gill S.R."/>
            <person name="Heidelberg J.F."/>
            <person name="White O."/>
            <person name="Hickey E.K."/>
            <person name="Peterson J.D."/>
            <person name="Utterback T.R."/>
            <person name="Berry K.J."/>
            <person name="Bass S."/>
            <person name="Linher K.D."/>
            <person name="Weidman J.F."/>
            <person name="Khouri H.M."/>
            <person name="Craven B."/>
            <person name="Bowman C."/>
            <person name="Dodson R.J."/>
            <person name="Gwinn M.L."/>
            <person name="Nelson W.C."/>
            <person name="DeBoy R.T."/>
            <person name="Kolonay J.F."/>
            <person name="McClarty G."/>
            <person name="Salzberg S.L."/>
            <person name="Eisen J.A."/>
            <person name="Fraser C.M."/>
        </authorList>
    </citation>
    <scope>NUCLEOTIDE SEQUENCE [LARGE SCALE GENOMIC DNA]</scope>
    <source>
        <strain>MoPn / Nigg</strain>
    </source>
</reference>
<gene>
    <name type="ordered locus">TC_0664</name>
</gene>
<feature type="chain" id="PRO_0000109815" description="Uncharacterized HIT-like protein TC_0664">
    <location>
        <begin position="1"/>
        <end position="126"/>
    </location>
</feature>
<feature type="domain" description="HIT" evidence="1">
    <location>
        <begin position="19"/>
        <end position="126"/>
    </location>
</feature>
<feature type="short sequence motif" description="Histidine triad motif">
    <location>
        <begin position="111"/>
        <end position="115"/>
    </location>
</feature>
<accession>Q9PK09</accession>